<protein>
    <recommendedName>
        <fullName>Probable G-protein coupled receptor 153</fullName>
    </recommendedName>
    <alternativeName>
        <fullName>G-protein coupled receptor PGR1</fullName>
    </alternativeName>
</protein>
<comment type="function">
    <text>Orphan receptor.</text>
</comment>
<comment type="subcellular location">
    <subcellularLocation>
        <location>Cell membrane</location>
        <topology>Multi-pass membrane protein</topology>
    </subcellularLocation>
</comment>
<comment type="similarity">
    <text evidence="2">Belongs to the G-protein coupled receptor 1 family.</text>
</comment>
<name>GP153_HUMAN</name>
<gene>
    <name type="primary">GPR153</name>
    <name type="synonym">PGR1</name>
</gene>
<evidence type="ECO:0000255" key="1"/>
<evidence type="ECO:0000255" key="2">
    <source>
        <dbReference type="PROSITE-ProRule" id="PRU00521"/>
    </source>
</evidence>
<evidence type="ECO:0000256" key="3">
    <source>
        <dbReference type="SAM" id="MobiDB-lite"/>
    </source>
</evidence>
<evidence type="ECO:0000269" key="4">
    <source>
    </source>
</evidence>
<evidence type="ECO:0000269" key="5">
    <source>
    </source>
</evidence>
<keyword id="KW-1003">Cell membrane</keyword>
<keyword id="KW-0297">G-protein coupled receptor</keyword>
<keyword id="KW-0472">Membrane</keyword>
<keyword id="KW-1267">Proteomics identification</keyword>
<keyword id="KW-0675">Receptor</keyword>
<keyword id="KW-1185">Reference proteome</keyword>
<keyword id="KW-0807">Transducer</keyword>
<keyword id="KW-0812">Transmembrane</keyword>
<keyword id="KW-1133">Transmembrane helix</keyword>
<proteinExistence type="evidence at protein level"/>
<sequence>MSDERRLPGSAVGWLVCGGLSLLANAWGILSVGAKQKKWKPLEFLLCTLAATHMLNVAVPIATYSVVQLRRQRPDFEWNEGLCKVFVSTFYTLTLATCFSVTSLSYHRMWMVCWPVNYRLSNAKKQAVHTVMGIWMVSFILSALPAVGWHDTSERFYTHGCRFIVAEIGLGFGVCFLLLVGGSVAMGVICTAIALFQTLAVQVGRQADRRAFTVPTIVVEDAQGKRRSSIDGSEPAKTSLQTTGLVTTIVFIYDCLMGFPVLVVSFSSLRADASAPWMALCVLWCSVAQALLLPVFLWACDRYRADLKAVREKCMALMANDEESDDETSLEGGISPDLVLERSLDYGYGGDFVALDRMAKYEISALEGGLPQLYPLRPLQEDKMQYLQVPPTRRFSHDDADVWAAVPLPAFLPRWGSGEDLAALAHLVLPAGPERRRASLLAFAEDAPPSRARRRSAESLLSLRPSALDSGPRGARDSPPGSPRRRPGPGPRSASASLLPDAFALTAFECEPQALRRPPGPFPAAPAAPDGADPGEAPTPPSSAQRSPGPRPSAHSHAGSLRPGLSASWGEPGGLRAAGGGGSTSSFLSSPSESSGYATLHSDSLGSAS</sequence>
<accession>Q6NV75</accession>
<accession>Q5TGR5</accession>
<accession>Q6AHW8</accession>
<accession>Q86SP8</accession>
<reference key="1">
    <citation type="journal article" date="2006" name="Nature">
        <title>The DNA sequence and biological annotation of human chromosome 1.</title>
        <authorList>
            <person name="Gregory S.G."/>
            <person name="Barlow K.F."/>
            <person name="McLay K.E."/>
            <person name="Kaul R."/>
            <person name="Swarbreck D."/>
            <person name="Dunham A."/>
            <person name="Scott C.E."/>
            <person name="Howe K.L."/>
            <person name="Woodfine K."/>
            <person name="Spencer C.C.A."/>
            <person name="Jones M.C."/>
            <person name="Gillson C."/>
            <person name="Searle S."/>
            <person name="Zhou Y."/>
            <person name="Kokocinski F."/>
            <person name="McDonald L."/>
            <person name="Evans R."/>
            <person name="Phillips K."/>
            <person name="Atkinson A."/>
            <person name="Cooper R."/>
            <person name="Jones C."/>
            <person name="Hall R.E."/>
            <person name="Andrews T.D."/>
            <person name="Lloyd C."/>
            <person name="Ainscough R."/>
            <person name="Almeida J.P."/>
            <person name="Ambrose K.D."/>
            <person name="Anderson F."/>
            <person name="Andrew R.W."/>
            <person name="Ashwell R.I.S."/>
            <person name="Aubin K."/>
            <person name="Babbage A.K."/>
            <person name="Bagguley C.L."/>
            <person name="Bailey J."/>
            <person name="Beasley H."/>
            <person name="Bethel G."/>
            <person name="Bird C.P."/>
            <person name="Bray-Allen S."/>
            <person name="Brown J.Y."/>
            <person name="Brown A.J."/>
            <person name="Buckley D."/>
            <person name="Burton J."/>
            <person name="Bye J."/>
            <person name="Carder C."/>
            <person name="Chapman J.C."/>
            <person name="Clark S.Y."/>
            <person name="Clarke G."/>
            <person name="Clee C."/>
            <person name="Cobley V."/>
            <person name="Collier R.E."/>
            <person name="Corby N."/>
            <person name="Coville G.J."/>
            <person name="Davies J."/>
            <person name="Deadman R."/>
            <person name="Dunn M."/>
            <person name="Earthrowl M."/>
            <person name="Ellington A.G."/>
            <person name="Errington H."/>
            <person name="Frankish A."/>
            <person name="Frankland J."/>
            <person name="French L."/>
            <person name="Garner P."/>
            <person name="Garnett J."/>
            <person name="Gay L."/>
            <person name="Ghori M.R.J."/>
            <person name="Gibson R."/>
            <person name="Gilby L.M."/>
            <person name="Gillett W."/>
            <person name="Glithero R.J."/>
            <person name="Grafham D.V."/>
            <person name="Griffiths C."/>
            <person name="Griffiths-Jones S."/>
            <person name="Grocock R."/>
            <person name="Hammond S."/>
            <person name="Harrison E.S.I."/>
            <person name="Hart E."/>
            <person name="Haugen E."/>
            <person name="Heath P.D."/>
            <person name="Holmes S."/>
            <person name="Holt K."/>
            <person name="Howden P.J."/>
            <person name="Hunt A.R."/>
            <person name="Hunt S.E."/>
            <person name="Hunter G."/>
            <person name="Isherwood J."/>
            <person name="James R."/>
            <person name="Johnson C."/>
            <person name="Johnson D."/>
            <person name="Joy A."/>
            <person name="Kay M."/>
            <person name="Kershaw J.K."/>
            <person name="Kibukawa M."/>
            <person name="Kimberley A.M."/>
            <person name="King A."/>
            <person name="Knights A.J."/>
            <person name="Lad H."/>
            <person name="Laird G."/>
            <person name="Lawlor S."/>
            <person name="Leongamornlert D.A."/>
            <person name="Lloyd D.M."/>
            <person name="Loveland J."/>
            <person name="Lovell J."/>
            <person name="Lush M.J."/>
            <person name="Lyne R."/>
            <person name="Martin S."/>
            <person name="Mashreghi-Mohammadi M."/>
            <person name="Matthews L."/>
            <person name="Matthews N.S.W."/>
            <person name="McLaren S."/>
            <person name="Milne S."/>
            <person name="Mistry S."/>
            <person name="Moore M.J.F."/>
            <person name="Nickerson T."/>
            <person name="O'Dell C.N."/>
            <person name="Oliver K."/>
            <person name="Palmeiri A."/>
            <person name="Palmer S.A."/>
            <person name="Parker A."/>
            <person name="Patel D."/>
            <person name="Pearce A.V."/>
            <person name="Peck A.I."/>
            <person name="Pelan S."/>
            <person name="Phelps K."/>
            <person name="Phillimore B.J."/>
            <person name="Plumb R."/>
            <person name="Rajan J."/>
            <person name="Raymond C."/>
            <person name="Rouse G."/>
            <person name="Saenphimmachak C."/>
            <person name="Sehra H.K."/>
            <person name="Sheridan E."/>
            <person name="Shownkeen R."/>
            <person name="Sims S."/>
            <person name="Skuce C.D."/>
            <person name="Smith M."/>
            <person name="Steward C."/>
            <person name="Subramanian S."/>
            <person name="Sycamore N."/>
            <person name="Tracey A."/>
            <person name="Tromans A."/>
            <person name="Van Helmond Z."/>
            <person name="Wall M."/>
            <person name="Wallis J.M."/>
            <person name="White S."/>
            <person name="Whitehead S.L."/>
            <person name="Wilkinson J.E."/>
            <person name="Willey D.L."/>
            <person name="Williams H."/>
            <person name="Wilming L."/>
            <person name="Wray P.W."/>
            <person name="Wu Z."/>
            <person name="Coulson A."/>
            <person name="Vaudin M."/>
            <person name="Sulston J.E."/>
            <person name="Durbin R.M."/>
            <person name="Hubbard T."/>
            <person name="Wooster R."/>
            <person name="Dunham I."/>
            <person name="Carter N.P."/>
            <person name="McVean G."/>
            <person name="Ross M.T."/>
            <person name="Harrow J."/>
            <person name="Olson M.V."/>
            <person name="Beck S."/>
            <person name="Rogers J."/>
            <person name="Bentley D.R."/>
        </authorList>
    </citation>
    <scope>NUCLEOTIDE SEQUENCE [LARGE SCALE GENOMIC DNA]</scope>
</reference>
<reference key="2">
    <citation type="journal article" date="2004" name="Genome Res.">
        <title>The status, quality, and expansion of the NIH full-length cDNA project: the Mammalian Gene Collection (MGC).</title>
        <authorList>
            <consortium name="The MGC Project Team"/>
        </authorList>
    </citation>
    <scope>NUCLEOTIDE SEQUENCE [LARGE SCALE MRNA]</scope>
    <scope>VARIANT HIS-209</scope>
    <source>
        <tissue>Brain</tissue>
    </source>
</reference>
<reference key="3">
    <citation type="journal article" date="2003" name="Proc. Natl. Acad. Sci. U.S.A.">
        <title>The G protein-coupled receptor repertoires of human and mouse.</title>
        <authorList>
            <person name="Vassilatis D.K."/>
            <person name="Hohmann J.G."/>
            <person name="Zeng H."/>
            <person name="Li F."/>
            <person name="Ranchalis J.E."/>
            <person name="Mortrud M.T."/>
            <person name="Brown A."/>
            <person name="Rodriguez S.S."/>
            <person name="Weller J.R."/>
            <person name="Wright A.C."/>
            <person name="Bergmann J.E."/>
            <person name="Gaitanaris G.A."/>
        </authorList>
    </citation>
    <scope>NUCLEOTIDE SEQUENCE [LARGE SCALE MRNA] OF 160-326</scope>
    <scope>VARIANT HIS-209</scope>
</reference>
<reference key="4">
    <citation type="journal article" date="2007" name="BMC Genomics">
        <title>The full-ORF clone resource of the German cDNA consortium.</title>
        <authorList>
            <person name="Bechtel S."/>
            <person name="Rosenfelder H."/>
            <person name="Duda A."/>
            <person name="Schmidt C.P."/>
            <person name="Ernst U."/>
            <person name="Wellenreuther R."/>
            <person name="Mehrle A."/>
            <person name="Schuster C."/>
            <person name="Bahr A."/>
            <person name="Bloecker H."/>
            <person name="Heubner D."/>
            <person name="Hoerlein A."/>
            <person name="Michel G."/>
            <person name="Wedler H."/>
            <person name="Koehrer K."/>
            <person name="Ottenwaelder B."/>
            <person name="Poustka A."/>
            <person name="Wiemann S."/>
            <person name="Schupp I."/>
        </authorList>
    </citation>
    <scope>NUCLEOTIDE SEQUENCE [LARGE SCALE MRNA] OF 388-609</scope>
    <source>
        <tissue>Melanoma</tissue>
    </source>
</reference>
<organism>
    <name type="scientific">Homo sapiens</name>
    <name type="common">Human</name>
    <dbReference type="NCBI Taxonomy" id="9606"/>
    <lineage>
        <taxon>Eukaryota</taxon>
        <taxon>Metazoa</taxon>
        <taxon>Chordata</taxon>
        <taxon>Craniata</taxon>
        <taxon>Vertebrata</taxon>
        <taxon>Euteleostomi</taxon>
        <taxon>Mammalia</taxon>
        <taxon>Eutheria</taxon>
        <taxon>Euarchontoglires</taxon>
        <taxon>Primates</taxon>
        <taxon>Haplorrhini</taxon>
        <taxon>Catarrhini</taxon>
        <taxon>Hominidae</taxon>
        <taxon>Homo</taxon>
    </lineage>
</organism>
<dbReference type="EMBL" id="AL031847">
    <property type="status" value="NOT_ANNOTATED_CDS"/>
    <property type="molecule type" value="Genomic_DNA"/>
</dbReference>
<dbReference type="EMBL" id="BC068275">
    <property type="protein sequence ID" value="AAH68275.1"/>
    <property type="molecule type" value="mRNA"/>
</dbReference>
<dbReference type="EMBL" id="AY255529">
    <property type="protein sequence ID" value="AAO85041.1"/>
    <property type="molecule type" value="mRNA"/>
</dbReference>
<dbReference type="EMBL" id="CR627473">
    <property type="protein sequence ID" value="CAH10674.1"/>
    <property type="molecule type" value="mRNA"/>
</dbReference>
<dbReference type="CCDS" id="CCDS64.1"/>
<dbReference type="RefSeq" id="NP_997253.2">
    <property type="nucleotide sequence ID" value="NM_207370.4"/>
</dbReference>
<dbReference type="RefSeq" id="XP_011539736.1">
    <property type="nucleotide sequence ID" value="XM_011541434.4"/>
</dbReference>
<dbReference type="RefSeq" id="XP_016856739.1">
    <property type="nucleotide sequence ID" value="XM_017001250.2"/>
</dbReference>
<dbReference type="RefSeq" id="XP_054192460.1">
    <property type="nucleotide sequence ID" value="XM_054336485.1"/>
</dbReference>
<dbReference type="RefSeq" id="XP_054192461.1">
    <property type="nucleotide sequence ID" value="XM_054336486.1"/>
</dbReference>
<dbReference type="SMR" id="Q6NV75"/>
<dbReference type="BioGRID" id="132319">
    <property type="interactions" value="2"/>
</dbReference>
<dbReference type="FunCoup" id="Q6NV75">
    <property type="interactions" value="262"/>
</dbReference>
<dbReference type="STRING" id="9606.ENSP00000367125"/>
<dbReference type="ChEMBL" id="CHEMBL4523876"/>
<dbReference type="GlyGen" id="Q6NV75">
    <property type="glycosylation" value="1 site"/>
</dbReference>
<dbReference type="iPTMnet" id="Q6NV75"/>
<dbReference type="PhosphoSitePlus" id="Q6NV75"/>
<dbReference type="BioMuta" id="GPR153"/>
<dbReference type="DMDM" id="81170632"/>
<dbReference type="MassIVE" id="Q6NV75"/>
<dbReference type="PaxDb" id="9606-ENSP00000367125"/>
<dbReference type="PeptideAtlas" id="Q6NV75"/>
<dbReference type="ProteomicsDB" id="66715"/>
<dbReference type="Antibodypedia" id="1936">
    <property type="antibodies" value="233 antibodies from 30 providers"/>
</dbReference>
<dbReference type="DNASU" id="387509"/>
<dbReference type="Ensembl" id="ENST00000377893.3">
    <property type="protein sequence ID" value="ENSP00000367125.2"/>
    <property type="gene ID" value="ENSG00000158292.7"/>
</dbReference>
<dbReference type="GeneID" id="387509"/>
<dbReference type="KEGG" id="hsa:387509"/>
<dbReference type="MANE-Select" id="ENST00000377893.3">
    <property type="protein sequence ID" value="ENSP00000367125.2"/>
    <property type="RefSeq nucleotide sequence ID" value="NM_207370.4"/>
    <property type="RefSeq protein sequence ID" value="NP_997253.2"/>
</dbReference>
<dbReference type="UCSC" id="uc001amp.2">
    <property type="organism name" value="human"/>
</dbReference>
<dbReference type="AGR" id="HGNC:23618"/>
<dbReference type="CTD" id="387509"/>
<dbReference type="DisGeNET" id="387509"/>
<dbReference type="GeneCards" id="GPR153"/>
<dbReference type="HGNC" id="HGNC:23618">
    <property type="gene designation" value="GPR153"/>
</dbReference>
<dbReference type="HPA" id="ENSG00000158292">
    <property type="expression patterns" value="Low tissue specificity"/>
</dbReference>
<dbReference type="neXtProt" id="NX_Q6NV75"/>
<dbReference type="OpenTargets" id="ENSG00000158292"/>
<dbReference type="PharmGKB" id="PA134929175"/>
<dbReference type="VEuPathDB" id="HostDB:ENSG00000158292"/>
<dbReference type="eggNOG" id="ENOG502QQA6">
    <property type="taxonomic scope" value="Eukaryota"/>
</dbReference>
<dbReference type="GeneTree" id="ENSGT00390000017213"/>
<dbReference type="HOGENOM" id="CLU_031636_2_0_1"/>
<dbReference type="InParanoid" id="Q6NV75"/>
<dbReference type="OMA" id="HTDLMYE"/>
<dbReference type="OrthoDB" id="9887972at2759"/>
<dbReference type="PAN-GO" id="Q6NV75">
    <property type="GO annotations" value="0 GO annotations based on evolutionary models"/>
</dbReference>
<dbReference type="PhylomeDB" id="Q6NV75"/>
<dbReference type="TreeFam" id="TF330832"/>
<dbReference type="PathwayCommons" id="Q6NV75"/>
<dbReference type="BioGRID-ORCS" id="387509">
    <property type="hits" value="18 hits in 1148 CRISPR screens"/>
</dbReference>
<dbReference type="GeneWiki" id="GPR153"/>
<dbReference type="GenomeRNAi" id="387509"/>
<dbReference type="Pharos" id="Q6NV75">
    <property type="development level" value="Tdark"/>
</dbReference>
<dbReference type="PRO" id="PR:Q6NV75"/>
<dbReference type="Proteomes" id="UP000005640">
    <property type="component" value="Chromosome 1"/>
</dbReference>
<dbReference type="RNAct" id="Q6NV75">
    <property type="molecule type" value="protein"/>
</dbReference>
<dbReference type="Bgee" id="ENSG00000158292">
    <property type="expression patterns" value="Expressed in ileal mucosa and 190 other cell types or tissues"/>
</dbReference>
<dbReference type="ExpressionAtlas" id="Q6NV75">
    <property type="expression patterns" value="baseline and differential"/>
</dbReference>
<dbReference type="GO" id="GO:0005886">
    <property type="term" value="C:plasma membrane"/>
    <property type="evidence" value="ECO:0007669"/>
    <property type="project" value="UniProtKB-SubCell"/>
</dbReference>
<dbReference type="GO" id="GO:0004930">
    <property type="term" value="F:G protein-coupled receptor activity"/>
    <property type="evidence" value="ECO:0007669"/>
    <property type="project" value="UniProtKB-KW"/>
</dbReference>
<dbReference type="Gene3D" id="1.20.1070.10">
    <property type="entry name" value="Rhodopsin 7-helix transmembrane proteins"/>
    <property type="match status" value="1"/>
</dbReference>
<dbReference type="InterPro" id="IPR022347">
    <property type="entry name" value="GCR_153/162"/>
</dbReference>
<dbReference type="InterPro" id="IPR000276">
    <property type="entry name" value="GPCR_Rhodpsn"/>
</dbReference>
<dbReference type="InterPro" id="IPR017452">
    <property type="entry name" value="GPCR_Rhodpsn_7TM"/>
</dbReference>
<dbReference type="InterPro" id="IPR022335">
    <property type="entry name" value="GPR153"/>
</dbReference>
<dbReference type="PANTHER" id="PTHR16518">
    <property type="entry name" value="G-PROTEIN COUPLED RECEPTOR 153, 162"/>
    <property type="match status" value="1"/>
</dbReference>
<dbReference type="PANTHER" id="PTHR16518:SF5">
    <property type="entry name" value="G-PROTEIN COUPLED RECEPTOR 153-RELATED"/>
    <property type="match status" value="1"/>
</dbReference>
<dbReference type="Pfam" id="PF00001">
    <property type="entry name" value="7tm_1"/>
    <property type="match status" value="1"/>
</dbReference>
<dbReference type="PRINTS" id="PR01992">
    <property type="entry name" value="GPR153"/>
</dbReference>
<dbReference type="PRINTS" id="PR01991">
    <property type="entry name" value="GPR153GPR162"/>
</dbReference>
<dbReference type="SUPFAM" id="SSF81321">
    <property type="entry name" value="Family A G protein-coupled receptor-like"/>
    <property type="match status" value="1"/>
</dbReference>
<dbReference type="PROSITE" id="PS50262">
    <property type="entry name" value="G_PROTEIN_RECEP_F1_2"/>
    <property type="match status" value="1"/>
</dbReference>
<feature type="chain" id="PRO_0000069637" description="Probable G-protein coupled receptor 153">
    <location>
        <begin position="1"/>
        <end position="609"/>
    </location>
</feature>
<feature type="topological domain" description="Extracellular" evidence="1">
    <location>
        <begin position="1"/>
        <end position="11"/>
    </location>
</feature>
<feature type="transmembrane region" description="Helical; Name=1" evidence="1">
    <location>
        <begin position="12"/>
        <end position="32"/>
    </location>
</feature>
<feature type="topological domain" description="Cytoplasmic" evidence="1">
    <location>
        <begin position="33"/>
        <end position="41"/>
    </location>
</feature>
<feature type="transmembrane region" description="Helical; Name=2" evidence="1">
    <location>
        <begin position="42"/>
        <end position="62"/>
    </location>
</feature>
<feature type="topological domain" description="Extracellular" evidence="1">
    <location>
        <begin position="63"/>
        <end position="84"/>
    </location>
</feature>
<feature type="transmembrane region" description="Helical; Name=3" evidence="1">
    <location>
        <begin position="85"/>
        <end position="105"/>
    </location>
</feature>
<feature type="topological domain" description="Cytoplasmic" evidence="1">
    <location>
        <begin position="106"/>
        <end position="126"/>
    </location>
</feature>
<feature type="transmembrane region" description="Helical; Name=4" evidence="1">
    <location>
        <begin position="127"/>
        <end position="147"/>
    </location>
</feature>
<feature type="topological domain" description="Extracellular" evidence="1">
    <location>
        <begin position="148"/>
        <end position="175"/>
    </location>
</feature>
<feature type="transmembrane region" description="Helical; Name=5" evidence="1">
    <location>
        <begin position="176"/>
        <end position="196"/>
    </location>
</feature>
<feature type="topological domain" description="Cytoplasmic" evidence="1">
    <location>
        <begin position="197"/>
        <end position="243"/>
    </location>
</feature>
<feature type="transmembrane region" description="Helical; Name=6" evidence="1">
    <location>
        <begin position="244"/>
        <end position="264"/>
    </location>
</feature>
<feature type="topological domain" description="Extracellular" evidence="1">
    <location>
        <begin position="265"/>
        <end position="276"/>
    </location>
</feature>
<feature type="transmembrane region" description="Helical; Name=7" evidence="1">
    <location>
        <begin position="277"/>
        <end position="297"/>
    </location>
</feature>
<feature type="topological domain" description="Cytoplasmic" evidence="1">
    <location>
        <begin position="298"/>
        <end position="609"/>
    </location>
</feature>
<feature type="region of interest" description="Disordered" evidence="3">
    <location>
        <begin position="446"/>
        <end position="496"/>
    </location>
</feature>
<feature type="region of interest" description="Disordered" evidence="3">
    <location>
        <begin position="514"/>
        <end position="609"/>
    </location>
</feature>
<feature type="compositionally biased region" description="Low complexity" evidence="3">
    <location>
        <begin position="458"/>
        <end position="479"/>
    </location>
</feature>
<feature type="compositionally biased region" description="Low complexity" evidence="3">
    <location>
        <begin position="527"/>
        <end position="536"/>
    </location>
</feature>
<feature type="compositionally biased region" description="Gly residues" evidence="3">
    <location>
        <begin position="571"/>
        <end position="583"/>
    </location>
</feature>
<feature type="compositionally biased region" description="Low complexity" evidence="3">
    <location>
        <begin position="584"/>
        <end position="596"/>
    </location>
</feature>
<feature type="sequence variant" id="VAR_023741" description="In dbSNP:rs12735670." evidence="4 5">
    <original>R</original>
    <variation>H</variation>
    <location>
        <position position="209"/>
    </location>
</feature>